<evidence type="ECO:0000250" key="1">
    <source>
        <dbReference type="UniProtKB" id="Q2FXT0"/>
    </source>
</evidence>
<evidence type="ECO:0000255" key="2">
    <source>
        <dbReference type="HAMAP-Rule" id="MF_00539"/>
    </source>
</evidence>
<evidence type="ECO:0000256" key="3">
    <source>
        <dbReference type="SAM" id="MobiDB-lite"/>
    </source>
</evidence>
<evidence type="ECO:0000305" key="4"/>
<accession>C1KVI7</accession>
<sequence length="96" mass="10551">MLKFDIQHFAHKKGGGSTSNGRDSESKRLGAKRADGQFVTGGSILYRQRGTKIYPGTNVGRGGDDTLFAKTDGVVRFERMGRDKKKVSVYPEVQEA</sequence>
<comment type="PTM">
    <text evidence="1">The N-terminus is cleaved by ribosomal processing cysteine protease Prp.</text>
</comment>
<comment type="similarity">
    <text evidence="2">Belongs to the bacterial ribosomal protein bL27 family.</text>
</comment>
<gene>
    <name evidence="2" type="primary">rpmA</name>
    <name type="ordered locus">Lm4b_01551</name>
</gene>
<protein>
    <recommendedName>
        <fullName evidence="2">Large ribosomal subunit protein bL27</fullName>
    </recommendedName>
    <alternativeName>
        <fullName evidence="4">50S ribosomal protein L27</fullName>
    </alternativeName>
</protein>
<organism>
    <name type="scientific">Listeria monocytogenes serotype 4b (strain CLIP80459)</name>
    <dbReference type="NCBI Taxonomy" id="568819"/>
    <lineage>
        <taxon>Bacteria</taxon>
        <taxon>Bacillati</taxon>
        <taxon>Bacillota</taxon>
        <taxon>Bacilli</taxon>
        <taxon>Bacillales</taxon>
        <taxon>Listeriaceae</taxon>
        <taxon>Listeria</taxon>
    </lineage>
</organism>
<dbReference type="EMBL" id="FM242711">
    <property type="protein sequence ID" value="CAS05312.1"/>
    <property type="molecule type" value="Genomic_DNA"/>
</dbReference>
<dbReference type="RefSeq" id="WP_003726866.1">
    <property type="nucleotide sequence ID" value="NC_012488.1"/>
</dbReference>
<dbReference type="SMR" id="C1KVI7"/>
<dbReference type="GeneID" id="93239419"/>
<dbReference type="KEGG" id="lmc:Lm4b_01551"/>
<dbReference type="HOGENOM" id="CLU_095424_4_0_9"/>
<dbReference type="GO" id="GO:0022625">
    <property type="term" value="C:cytosolic large ribosomal subunit"/>
    <property type="evidence" value="ECO:0007669"/>
    <property type="project" value="TreeGrafter"/>
</dbReference>
<dbReference type="GO" id="GO:0003735">
    <property type="term" value="F:structural constituent of ribosome"/>
    <property type="evidence" value="ECO:0007669"/>
    <property type="project" value="InterPro"/>
</dbReference>
<dbReference type="GO" id="GO:0006412">
    <property type="term" value="P:translation"/>
    <property type="evidence" value="ECO:0007669"/>
    <property type="project" value="UniProtKB-UniRule"/>
</dbReference>
<dbReference type="FunFam" id="2.40.50.100:FF:000004">
    <property type="entry name" value="50S ribosomal protein L27"/>
    <property type="match status" value="1"/>
</dbReference>
<dbReference type="Gene3D" id="2.40.50.100">
    <property type="match status" value="1"/>
</dbReference>
<dbReference type="HAMAP" id="MF_00539">
    <property type="entry name" value="Ribosomal_bL27"/>
    <property type="match status" value="1"/>
</dbReference>
<dbReference type="InterPro" id="IPR001684">
    <property type="entry name" value="Ribosomal_bL27"/>
</dbReference>
<dbReference type="InterPro" id="IPR018261">
    <property type="entry name" value="Ribosomal_bL27_CS"/>
</dbReference>
<dbReference type="NCBIfam" id="TIGR00062">
    <property type="entry name" value="L27"/>
    <property type="match status" value="1"/>
</dbReference>
<dbReference type="PANTHER" id="PTHR15893:SF0">
    <property type="entry name" value="LARGE RIBOSOMAL SUBUNIT PROTEIN BL27M"/>
    <property type="match status" value="1"/>
</dbReference>
<dbReference type="PANTHER" id="PTHR15893">
    <property type="entry name" value="RIBOSOMAL PROTEIN L27"/>
    <property type="match status" value="1"/>
</dbReference>
<dbReference type="Pfam" id="PF01016">
    <property type="entry name" value="Ribosomal_L27"/>
    <property type="match status" value="1"/>
</dbReference>
<dbReference type="PRINTS" id="PR00063">
    <property type="entry name" value="RIBOSOMALL27"/>
</dbReference>
<dbReference type="SUPFAM" id="SSF110324">
    <property type="entry name" value="Ribosomal L27 protein-like"/>
    <property type="match status" value="1"/>
</dbReference>
<dbReference type="PROSITE" id="PS00831">
    <property type="entry name" value="RIBOSOMAL_L27"/>
    <property type="match status" value="1"/>
</dbReference>
<proteinExistence type="inferred from homology"/>
<keyword id="KW-0687">Ribonucleoprotein</keyword>
<keyword id="KW-0689">Ribosomal protein</keyword>
<reference key="1">
    <citation type="journal article" date="2012" name="BMC Genomics">
        <title>Comparative genomics and transcriptomics of lineages I, II, and III strains of Listeria monocytogenes.</title>
        <authorList>
            <person name="Hain T."/>
            <person name="Ghai R."/>
            <person name="Billion A."/>
            <person name="Kuenne C.T."/>
            <person name="Steinweg C."/>
            <person name="Izar B."/>
            <person name="Mohamed W."/>
            <person name="Mraheil M."/>
            <person name="Domann E."/>
            <person name="Schaffrath S."/>
            <person name="Karst U."/>
            <person name="Goesmann A."/>
            <person name="Oehm S."/>
            <person name="Puhler A."/>
            <person name="Merkl R."/>
            <person name="Vorwerk S."/>
            <person name="Glaser P."/>
            <person name="Garrido P."/>
            <person name="Rusniok C."/>
            <person name="Buchrieser C."/>
            <person name="Goebel W."/>
            <person name="Chakraborty T."/>
        </authorList>
    </citation>
    <scope>NUCLEOTIDE SEQUENCE [LARGE SCALE GENOMIC DNA]</scope>
    <source>
        <strain>CLIP80459</strain>
    </source>
</reference>
<name>RL27_LISMC</name>
<feature type="propeptide" id="PRO_0000459911" evidence="1">
    <location>
        <begin position="1"/>
        <end position="9"/>
    </location>
</feature>
<feature type="chain" id="PRO_1000211934" description="Large ribosomal subunit protein bL27">
    <location>
        <begin position="10"/>
        <end position="96"/>
    </location>
</feature>
<feature type="region of interest" description="Disordered" evidence="3">
    <location>
        <begin position="1"/>
        <end position="33"/>
    </location>
</feature>
<feature type="compositionally biased region" description="Basic and acidic residues" evidence="3">
    <location>
        <begin position="22"/>
        <end position="33"/>
    </location>
</feature>